<keyword id="KW-0227">DNA damage</keyword>
<keyword id="KW-0234">DNA repair</keyword>
<keyword id="KW-0235">DNA replication</keyword>
<keyword id="KW-0255">Endonuclease</keyword>
<keyword id="KW-0269">Exonuclease</keyword>
<keyword id="KW-0378">Hydrolase</keyword>
<keyword id="KW-0460">Magnesium</keyword>
<keyword id="KW-0479">Metal-binding</keyword>
<keyword id="KW-0540">Nuclease</keyword>
<keyword id="KW-1185">Reference proteome</keyword>
<sequence>MGTDIGDLLQKRKIELSDLSNRVVAVDAFNTLHQFLSIIRQRDGSPLVNSRGKVTSHLSGLLYRTASLVEAGIKPVFIFDGKPPDLKSETLSRRKEVRETSLEKWENAKAEGDLEAAYKYAQASSRVDQEIVEDSKYLLGIMGIPWIQAPCEGEAQAAHMVLKKDADYVASQDYDSFLFGAPKVVRNMAVTGKRKLPGKNVYVDVELEVIELEETLRALEINRDQLIDIAICVGTDYNKGLEKVGPKTALKLIKKHGDIHAVLREKDMEIEGLDRIRKLFTHPEVTEDYEIKWTKPDSEKLIKFLCEENDFSTDRVEKAAERLKAASGARQKTLDQWF</sequence>
<protein>
    <recommendedName>
        <fullName evidence="2">Flap endonuclease 1</fullName>
        <shortName evidence="2">FEN-1</shortName>
        <ecNumber evidence="2">3.1.-.-</ecNumber>
    </recommendedName>
    <alternativeName>
        <fullName evidence="2">Flap structure-specific endonuclease 1</fullName>
    </alternativeName>
</protein>
<name>FEN_METAC</name>
<organism>
    <name type="scientific">Methanosarcina acetivorans (strain ATCC 35395 / DSM 2834 / JCM 12185 / C2A)</name>
    <dbReference type="NCBI Taxonomy" id="188937"/>
    <lineage>
        <taxon>Archaea</taxon>
        <taxon>Methanobacteriati</taxon>
        <taxon>Methanobacteriota</taxon>
        <taxon>Stenosarchaea group</taxon>
        <taxon>Methanomicrobia</taxon>
        <taxon>Methanosarcinales</taxon>
        <taxon>Methanosarcinaceae</taxon>
        <taxon>Methanosarcina</taxon>
    </lineage>
</organism>
<proteinExistence type="inferred from homology"/>
<feature type="chain" id="PRO_0000154052" description="Flap endonuclease 1">
    <location>
        <begin position="1"/>
        <end position="338"/>
    </location>
</feature>
<feature type="region of interest" description="N-domain">
    <location>
        <begin position="1"/>
        <end position="98"/>
    </location>
</feature>
<feature type="region of interest" description="I-domain">
    <location>
        <begin position="116"/>
        <end position="257"/>
    </location>
</feature>
<feature type="region of interest" description="Interaction with PCNA" evidence="2">
    <location>
        <begin position="330"/>
        <end position="338"/>
    </location>
</feature>
<feature type="binding site" evidence="2">
    <location>
        <position position="27"/>
    </location>
    <ligand>
        <name>Mg(2+)</name>
        <dbReference type="ChEBI" id="CHEBI:18420"/>
        <label>1</label>
    </ligand>
</feature>
<feature type="binding site" evidence="2">
    <location>
        <position position="80"/>
    </location>
    <ligand>
        <name>Mg(2+)</name>
        <dbReference type="ChEBI" id="CHEBI:18420"/>
        <label>1</label>
    </ligand>
</feature>
<feature type="binding site" evidence="2">
    <location>
        <position position="152"/>
    </location>
    <ligand>
        <name>Mg(2+)</name>
        <dbReference type="ChEBI" id="CHEBI:18420"/>
        <label>1</label>
    </ligand>
</feature>
<feature type="binding site" evidence="2">
    <location>
        <position position="154"/>
    </location>
    <ligand>
        <name>Mg(2+)</name>
        <dbReference type="ChEBI" id="CHEBI:18420"/>
        <label>1</label>
    </ligand>
</feature>
<feature type="binding site" evidence="2">
    <location>
        <position position="173"/>
    </location>
    <ligand>
        <name>Mg(2+)</name>
        <dbReference type="ChEBI" id="CHEBI:18420"/>
        <label>2</label>
    </ligand>
</feature>
<feature type="binding site" evidence="2">
    <location>
        <position position="175"/>
    </location>
    <ligand>
        <name>Mg(2+)</name>
        <dbReference type="ChEBI" id="CHEBI:18420"/>
        <label>2</label>
    </ligand>
</feature>
<feature type="binding site" evidence="2">
    <location>
        <position position="236"/>
    </location>
    <ligand>
        <name>Mg(2+)</name>
        <dbReference type="ChEBI" id="CHEBI:18420"/>
        <label>2</label>
    </ligand>
</feature>
<reference key="1">
    <citation type="journal article" date="2002" name="Genome Res.">
        <title>The genome of Methanosarcina acetivorans reveals extensive metabolic and physiological diversity.</title>
        <authorList>
            <person name="Galagan J.E."/>
            <person name="Nusbaum C."/>
            <person name="Roy A."/>
            <person name="Endrizzi M.G."/>
            <person name="Macdonald P."/>
            <person name="FitzHugh W."/>
            <person name="Calvo S."/>
            <person name="Engels R."/>
            <person name="Smirnov S."/>
            <person name="Atnoor D."/>
            <person name="Brown A."/>
            <person name="Allen N."/>
            <person name="Naylor J."/>
            <person name="Stange-Thomann N."/>
            <person name="DeArellano K."/>
            <person name="Johnson R."/>
            <person name="Linton L."/>
            <person name="McEwan P."/>
            <person name="McKernan K."/>
            <person name="Talamas J."/>
            <person name="Tirrell A."/>
            <person name="Ye W."/>
            <person name="Zimmer A."/>
            <person name="Barber R.D."/>
            <person name="Cann I."/>
            <person name="Graham D.E."/>
            <person name="Grahame D.A."/>
            <person name="Guss A.M."/>
            <person name="Hedderich R."/>
            <person name="Ingram-Smith C."/>
            <person name="Kuettner H.C."/>
            <person name="Krzycki J.A."/>
            <person name="Leigh J.A."/>
            <person name="Li W."/>
            <person name="Liu J."/>
            <person name="Mukhopadhyay B."/>
            <person name="Reeve J.N."/>
            <person name="Smith K."/>
            <person name="Springer T.A."/>
            <person name="Umayam L.A."/>
            <person name="White O."/>
            <person name="White R.H."/>
            <person name="de Macario E.C."/>
            <person name="Ferry J.G."/>
            <person name="Jarrell K.F."/>
            <person name="Jing H."/>
            <person name="Macario A.J.L."/>
            <person name="Paulsen I.T."/>
            <person name="Pritchett M."/>
            <person name="Sowers K.R."/>
            <person name="Swanson R.V."/>
            <person name="Zinder S.H."/>
            <person name="Lander E."/>
            <person name="Metcalf W.W."/>
            <person name="Birren B."/>
        </authorList>
    </citation>
    <scope>NUCLEOTIDE SEQUENCE [LARGE SCALE GENOMIC DNA]</scope>
    <source>
        <strain>ATCC 35395 / DSM 2834 / JCM 12185 / C2A</strain>
    </source>
</reference>
<evidence type="ECO:0000250" key="1"/>
<evidence type="ECO:0000255" key="2">
    <source>
        <dbReference type="HAMAP-Rule" id="MF_00614"/>
    </source>
</evidence>
<comment type="function">
    <text evidence="1">Structure-specific nuclease with 5'-flap endonuclease and 5'-3' exonuclease activities involved in DNA replication and repair. During DNA replication, cleaves the 5'-overhanging flap structure that is generated by displacement synthesis when DNA polymerase encounters the 5'-end of a downstream Okazaki fragment. Binds the unpaired 3'-DNA end and kinks the DNA to facilitate 5' cleavage specificity. Cleaves one nucleotide into the double-stranded DNA from the junction in flap DNA, leaving a nick for ligation. Also involved in the base excision repair (BER) pathway. Acts as a genome stabilization factor that prevents flaps from equilibrating into structures that lead to duplications and deletions. Also possesses 5'-3' exonuclease activity on nicked or gapped double-stranded DNA (By similarity).</text>
</comment>
<comment type="cofactor">
    <cofactor evidence="2">
        <name>Mg(2+)</name>
        <dbReference type="ChEBI" id="CHEBI:18420"/>
    </cofactor>
    <text evidence="2">Binds 2 magnesium ions per subunit. They probably participate in the reaction catalyzed by the enzyme. May bind an additional third magnesium ion after substrate binding.</text>
</comment>
<comment type="subunit">
    <text evidence="2">Interacts with PCNA. PCNA stimulates the nuclease activity without altering cleavage specificity.</text>
</comment>
<comment type="similarity">
    <text evidence="2">Belongs to the XPG/RAD2 endonuclease family. FEN1 subfamily.</text>
</comment>
<dbReference type="EC" id="3.1.-.-" evidence="2"/>
<dbReference type="EMBL" id="AE010299">
    <property type="protein sequence ID" value="AAM07354.1"/>
    <property type="molecule type" value="Genomic_DNA"/>
</dbReference>
<dbReference type="RefSeq" id="WP_011023899.1">
    <property type="nucleotide sequence ID" value="NC_003552.1"/>
</dbReference>
<dbReference type="SMR" id="Q8TIY5"/>
<dbReference type="FunCoup" id="Q8TIY5">
    <property type="interactions" value="167"/>
</dbReference>
<dbReference type="STRING" id="188937.MA_4004"/>
<dbReference type="EnsemblBacteria" id="AAM07354">
    <property type="protein sequence ID" value="AAM07354"/>
    <property type="gene ID" value="MA_4004"/>
</dbReference>
<dbReference type="GeneID" id="1475898"/>
<dbReference type="KEGG" id="mac:MA_4004"/>
<dbReference type="HOGENOM" id="CLU_032444_0_0_2"/>
<dbReference type="InParanoid" id="Q8TIY5"/>
<dbReference type="OrthoDB" id="9593at2157"/>
<dbReference type="PhylomeDB" id="Q8TIY5"/>
<dbReference type="Proteomes" id="UP000002487">
    <property type="component" value="Chromosome"/>
</dbReference>
<dbReference type="GO" id="GO:0008409">
    <property type="term" value="F:5'-3' exonuclease activity"/>
    <property type="evidence" value="ECO:0007669"/>
    <property type="project" value="UniProtKB-UniRule"/>
</dbReference>
<dbReference type="GO" id="GO:0017108">
    <property type="term" value="F:5'-flap endonuclease activity"/>
    <property type="evidence" value="ECO:0000318"/>
    <property type="project" value="GO_Central"/>
</dbReference>
<dbReference type="GO" id="GO:0003677">
    <property type="term" value="F:DNA binding"/>
    <property type="evidence" value="ECO:0007669"/>
    <property type="project" value="UniProtKB-UniRule"/>
</dbReference>
<dbReference type="GO" id="GO:0000287">
    <property type="term" value="F:magnesium ion binding"/>
    <property type="evidence" value="ECO:0007669"/>
    <property type="project" value="UniProtKB-UniRule"/>
</dbReference>
<dbReference type="GO" id="GO:0006281">
    <property type="term" value="P:DNA repair"/>
    <property type="evidence" value="ECO:0007669"/>
    <property type="project" value="UniProtKB-UniRule"/>
</dbReference>
<dbReference type="GO" id="GO:0043137">
    <property type="term" value="P:DNA replication, removal of RNA primer"/>
    <property type="evidence" value="ECO:0007669"/>
    <property type="project" value="UniProtKB-UniRule"/>
</dbReference>
<dbReference type="CDD" id="cd09903">
    <property type="entry name" value="H3TH_FEN1-Arc"/>
    <property type="match status" value="1"/>
</dbReference>
<dbReference type="CDD" id="cd09867">
    <property type="entry name" value="PIN_FEN1"/>
    <property type="match status" value="1"/>
</dbReference>
<dbReference type="FunFam" id="1.10.150.20:FF:000087">
    <property type="entry name" value="Flap endonuclease 1"/>
    <property type="match status" value="1"/>
</dbReference>
<dbReference type="FunFam" id="3.40.50.1010:FF:000016">
    <property type="entry name" value="Flap endonuclease 1"/>
    <property type="match status" value="1"/>
</dbReference>
<dbReference type="Gene3D" id="1.10.150.20">
    <property type="entry name" value="5' to 3' exonuclease, C-terminal subdomain"/>
    <property type="match status" value="1"/>
</dbReference>
<dbReference type="Gene3D" id="3.40.50.1010">
    <property type="entry name" value="5'-nuclease"/>
    <property type="match status" value="1"/>
</dbReference>
<dbReference type="HAMAP" id="MF_00614">
    <property type="entry name" value="Fen"/>
    <property type="match status" value="1"/>
</dbReference>
<dbReference type="InterPro" id="IPR036279">
    <property type="entry name" value="5-3_exonuclease_C_sf"/>
</dbReference>
<dbReference type="InterPro" id="IPR023426">
    <property type="entry name" value="Flap_endonuc"/>
</dbReference>
<dbReference type="InterPro" id="IPR019973">
    <property type="entry name" value="Flap_endonuc_arc"/>
</dbReference>
<dbReference type="InterPro" id="IPR008918">
    <property type="entry name" value="HhH2"/>
</dbReference>
<dbReference type="InterPro" id="IPR029060">
    <property type="entry name" value="PIN-like_dom_sf"/>
</dbReference>
<dbReference type="InterPro" id="IPR006086">
    <property type="entry name" value="XPG-I_dom"/>
</dbReference>
<dbReference type="InterPro" id="IPR006084">
    <property type="entry name" value="XPG/Rad2"/>
</dbReference>
<dbReference type="InterPro" id="IPR019974">
    <property type="entry name" value="XPG_CS"/>
</dbReference>
<dbReference type="InterPro" id="IPR006085">
    <property type="entry name" value="XPG_DNA_repair_N"/>
</dbReference>
<dbReference type="NCBIfam" id="TIGR03674">
    <property type="entry name" value="fen_arch"/>
    <property type="match status" value="1"/>
</dbReference>
<dbReference type="PANTHER" id="PTHR11081:SF9">
    <property type="entry name" value="FLAP ENDONUCLEASE 1"/>
    <property type="match status" value="1"/>
</dbReference>
<dbReference type="PANTHER" id="PTHR11081">
    <property type="entry name" value="FLAP ENDONUCLEASE FAMILY MEMBER"/>
    <property type="match status" value="1"/>
</dbReference>
<dbReference type="Pfam" id="PF00867">
    <property type="entry name" value="XPG_I"/>
    <property type="match status" value="1"/>
</dbReference>
<dbReference type="Pfam" id="PF00752">
    <property type="entry name" value="XPG_N"/>
    <property type="match status" value="1"/>
</dbReference>
<dbReference type="PRINTS" id="PR00853">
    <property type="entry name" value="XPGRADSUPER"/>
</dbReference>
<dbReference type="SMART" id="SM00279">
    <property type="entry name" value="HhH2"/>
    <property type="match status" value="1"/>
</dbReference>
<dbReference type="SMART" id="SM00484">
    <property type="entry name" value="XPGI"/>
    <property type="match status" value="1"/>
</dbReference>
<dbReference type="SMART" id="SM00485">
    <property type="entry name" value="XPGN"/>
    <property type="match status" value="1"/>
</dbReference>
<dbReference type="SUPFAM" id="SSF47807">
    <property type="entry name" value="5' to 3' exonuclease, C-terminal subdomain"/>
    <property type="match status" value="1"/>
</dbReference>
<dbReference type="SUPFAM" id="SSF88723">
    <property type="entry name" value="PIN domain-like"/>
    <property type="match status" value="1"/>
</dbReference>
<dbReference type="PROSITE" id="PS00841">
    <property type="entry name" value="XPG_1"/>
    <property type="match status" value="1"/>
</dbReference>
<accession>Q8TIY5</accession>
<gene>
    <name evidence="2" type="primary">fen</name>
    <name type="ordered locus">MA_4004</name>
</gene>